<accession>P24367</accession>
<reference key="1">
    <citation type="journal article" date="1991" name="J. Biol. Chem.">
        <title>S-cyclophilin. New member of the cyclophilin family associated with the secretory pathway.</title>
        <authorList>
            <person name="Caroni P."/>
            <person name="Rothenfluh A."/>
            <person name="McGlynn E."/>
            <person name="Schneider C."/>
        </authorList>
    </citation>
    <scope>NUCLEOTIDE SEQUENCE [MRNA]</scope>
</reference>
<proteinExistence type="evidence at transcript level"/>
<keyword id="KW-0256">Endoplasmic reticulum</keyword>
<keyword id="KW-0413">Isomerase</keyword>
<keyword id="KW-1185">Reference proteome</keyword>
<keyword id="KW-0697">Rotamase</keyword>
<keyword id="KW-0732">Signal</keyword>
<evidence type="ECO:0000250" key="1"/>
<evidence type="ECO:0000250" key="2">
    <source>
        <dbReference type="UniProtKB" id="P23284"/>
    </source>
</evidence>
<evidence type="ECO:0000255" key="3">
    <source>
        <dbReference type="PROSITE-ProRule" id="PRU00156"/>
    </source>
</evidence>
<evidence type="ECO:0000305" key="4"/>
<gene>
    <name type="primary">PPIB</name>
</gene>
<name>PPIB_CHICK</name>
<dbReference type="EC" id="5.2.1.8" evidence="2"/>
<dbReference type="EMBL" id="M63553">
    <property type="protein sequence ID" value="AAA49064.1"/>
    <property type="molecule type" value="mRNA"/>
</dbReference>
<dbReference type="PIR" id="A40516">
    <property type="entry name" value="A40516"/>
</dbReference>
<dbReference type="RefSeq" id="NP_990792.1">
    <property type="nucleotide sequence ID" value="NM_205461.1"/>
</dbReference>
<dbReference type="SMR" id="P24367"/>
<dbReference type="BioGRID" id="676696">
    <property type="interactions" value="1"/>
</dbReference>
<dbReference type="FunCoup" id="P24367">
    <property type="interactions" value="2177"/>
</dbReference>
<dbReference type="IntAct" id="P24367">
    <property type="interactions" value="1"/>
</dbReference>
<dbReference type="STRING" id="9031.ENSGALP00000061454"/>
<dbReference type="PaxDb" id="9031-ENSGALP00000003455"/>
<dbReference type="KEGG" id="gga:396447"/>
<dbReference type="VEuPathDB" id="HostDB:geneid_396447"/>
<dbReference type="eggNOG" id="KOG0880">
    <property type="taxonomic scope" value="Eukaryota"/>
</dbReference>
<dbReference type="InParanoid" id="P24367"/>
<dbReference type="OrthoDB" id="193499at2759"/>
<dbReference type="PhylomeDB" id="P24367"/>
<dbReference type="PRO" id="PR:P24367"/>
<dbReference type="Proteomes" id="UP000000539">
    <property type="component" value="Unassembled WGS sequence"/>
</dbReference>
<dbReference type="GO" id="GO:0005737">
    <property type="term" value="C:cytoplasm"/>
    <property type="evidence" value="ECO:0000318"/>
    <property type="project" value="GO_Central"/>
</dbReference>
<dbReference type="GO" id="GO:0005788">
    <property type="term" value="C:endoplasmic reticulum lumen"/>
    <property type="evidence" value="ECO:0007669"/>
    <property type="project" value="UniProtKB-SubCell"/>
</dbReference>
<dbReference type="GO" id="GO:0043231">
    <property type="term" value="C:intracellular membrane-bounded organelle"/>
    <property type="evidence" value="ECO:0000318"/>
    <property type="project" value="GO_Central"/>
</dbReference>
<dbReference type="GO" id="GO:0042470">
    <property type="term" value="C:melanosome"/>
    <property type="evidence" value="ECO:0007669"/>
    <property type="project" value="UniProtKB-SubCell"/>
</dbReference>
<dbReference type="GO" id="GO:0032991">
    <property type="term" value="C:protein-containing complex"/>
    <property type="evidence" value="ECO:0000314"/>
    <property type="project" value="UniProtKB"/>
</dbReference>
<dbReference type="GO" id="GO:0016018">
    <property type="term" value="F:cyclosporin A binding"/>
    <property type="evidence" value="ECO:0000318"/>
    <property type="project" value="GO_Central"/>
</dbReference>
<dbReference type="GO" id="GO:0003755">
    <property type="term" value="F:peptidyl-prolyl cis-trans isomerase activity"/>
    <property type="evidence" value="ECO:0000314"/>
    <property type="project" value="UniProtKB"/>
</dbReference>
<dbReference type="GO" id="GO:0061077">
    <property type="term" value="P:chaperone-mediated protein folding"/>
    <property type="evidence" value="ECO:0000314"/>
    <property type="project" value="UniProtKB"/>
</dbReference>
<dbReference type="GO" id="GO:1904027">
    <property type="term" value="P:negative regulation of collagen fibril organization"/>
    <property type="evidence" value="ECO:0000314"/>
    <property type="project" value="UniProtKB"/>
</dbReference>
<dbReference type="GO" id="GO:0006457">
    <property type="term" value="P:protein folding"/>
    <property type="evidence" value="ECO:0000318"/>
    <property type="project" value="GO_Central"/>
</dbReference>
<dbReference type="CDD" id="cd01926">
    <property type="entry name" value="cyclophilin_ABH_like"/>
    <property type="match status" value="1"/>
</dbReference>
<dbReference type="FunFam" id="2.40.100.10:FF:000001">
    <property type="entry name" value="Peptidyl-prolyl cis-trans isomerase"/>
    <property type="match status" value="1"/>
</dbReference>
<dbReference type="Gene3D" id="2.40.100.10">
    <property type="entry name" value="Cyclophilin-like"/>
    <property type="match status" value="1"/>
</dbReference>
<dbReference type="InterPro" id="IPR029000">
    <property type="entry name" value="Cyclophilin-like_dom_sf"/>
</dbReference>
<dbReference type="InterPro" id="IPR024936">
    <property type="entry name" value="Cyclophilin-type_PPIase"/>
</dbReference>
<dbReference type="InterPro" id="IPR020892">
    <property type="entry name" value="Cyclophilin-type_PPIase_CS"/>
</dbReference>
<dbReference type="InterPro" id="IPR002130">
    <property type="entry name" value="Cyclophilin-type_PPIase_dom"/>
</dbReference>
<dbReference type="PANTHER" id="PTHR11071">
    <property type="entry name" value="PEPTIDYL-PROLYL CIS-TRANS ISOMERASE"/>
    <property type="match status" value="1"/>
</dbReference>
<dbReference type="PANTHER" id="PTHR11071:SF477">
    <property type="entry name" value="PEPTIDYL-PROLYL CIS-TRANS ISOMERASE B"/>
    <property type="match status" value="1"/>
</dbReference>
<dbReference type="Pfam" id="PF00160">
    <property type="entry name" value="Pro_isomerase"/>
    <property type="match status" value="1"/>
</dbReference>
<dbReference type="PIRSF" id="PIRSF001467">
    <property type="entry name" value="Peptidylpro_ismrse"/>
    <property type="match status" value="1"/>
</dbReference>
<dbReference type="PRINTS" id="PR00153">
    <property type="entry name" value="CSAPPISMRASE"/>
</dbReference>
<dbReference type="SUPFAM" id="SSF50891">
    <property type="entry name" value="Cyclophilin-like"/>
    <property type="match status" value="1"/>
</dbReference>
<dbReference type="PROSITE" id="PS00170">
    <property type="entry name" value="CSA_PPIASE_1"/>
    <property type="match status" value="1"/>
</dbReference>
<dbReference type="PROSITE" id="PS50072">
    <property type="entry name" value="CSA_PPIASE_2"/>
    <property type="match status" value="1"/>
</dbReference>
<feature type="signal peptide" evidence="1">
    <location>
        <begin position="1"/>
        <end position="24"/>
    </location>
</feature>
<feature type="chain" id="PRO_0000025482" description="Peptidyl-prolyl cis-trans isomerase B">
    <location>
        <begin position="25"/>
        <end position="207"/>
    </location>
</feature>
<feature type="domain" description="PPIase cyclophilin-type" evidence="3">
    <location>
        <begin position="38"/>
        <end position="195"/>
    </location>
</feature>
<feature type="short sequence motif" description="Prevents secretion from ER" evidence="1">
    <location>
        <begin position="198"/>
        <end position="207"/>
    </location>
</feature>
<organism>
    <name type="scientific">Gallus gallus</name>
    <name type="common">Chicken</name>
    <dbReference type="NCBI Taxonomy" id="9031"/>
    <lineage>
        <taxon>Eukaryota</taxon>
        <taxon>Metazoa</taxon>
        <taxon>Chordata</taxon>
        <taxon>Craniata</taxon>
        <taxon>Vertebrata</taxon>
        <taxon>Euteleostomi</taxon>
        <taxon>Archelosauria</taxon>
        <taxon>Archosauria</taxon>
        <taxon>Dinosauria</taxon>
        <taxon>Saurischia</taxon>
        <taxon>Theropoda</taxon>
        <taxon>Coelurosauria</taxon>
        <taxon>Aves</taxon>
        <taxon>Neognathae</taxon>
        <taxon>Galloanserae</taxon>
        <taxon>Galliformes</taxon>
        <taxon>Phasianidae</taxon>
        <taxon>Phasianinae</taxon>
        <taxon>Gallus</taxon>
    </lineage>
</organism>
<sequence length="207" mass="22413">MKALVAATALGPALLLLLPAASRADERKKGPKVTAKVFFDLRVGEEDAGRVVIGLFGKTVPKTVENFVALATGEKGFGFKGSKFHRVIKDFMIQGGDFTRGDGTGGKSIYGDRFPDENFKLKHYGPGWVSMANAGKDTNGSQFFITTVKTAWLDGKHVVFGKVLEGMDVVRKVENTKTDSRDKPLKDVTIADCGTIEVEKPFAIAKE</sequence>
<comment type="function">
    <text evidence="2">PPIase that catalyzes the cis-trans isomerization of proline imidic peptide bonds in oligopeptides and may therefore assist protein folding.</text>
</comment>
<comment type="catalytic activity">
    <reaction evidence="2">
        <text>[protein]-peptidylproline (omega=180) = [protein]-peptidylproline (omega=0)</text>
        <dbReference type="Rhea" id="RHEA:16237"/>
        <dbReference type="Rhea" id="RHEA-COMP:10747"/>
        <dbReference type="Rhea" id="RHEA-COMP:10748"/>
        <dbReference type="ChEBI" id="CHEBI:83833"/>
        <dbReference type="ChEBI" id="CHEBI:83834"/>
        <dbReference type="EC" id="5.2.1.8"/>
    </reaction>
</comment>
<comment type="activity regulation">
    <text evidence="2">Inhibited by cyclosporin A (CsA).</text>
</comment>
<comment type="subcellular location">
    <subcellularLocation>
        <location evidence="2">Endoplasmic reticulum lumen</location>
    </subcellularLocation>
    <subcellularLocation>
        <location evidence="2">Melanosome</location>
    </subcellularLocation>
    <text evidence="2">Identified by mass spectrometry in melanosome fractions from stage I to stage IV.</text>
</comment>
<comment type="similarity">
    <text evidence="4">Belongs to the cyclophilin-type PPIase family. PPIase B subfamily.</text>
</comment>
<protein>
    <recommendedName>
        <fullName>Peptidyl-prolyl cis-trans isomerase B</fullName>
        <shortName>PPIase B</shortName>
        <ecNumber evidence="2">5.2.1.8</ecNumber>
    </recommendedName>
    <alternativeName>
        <fullName>Cyclophilin B</fullName>
    </alternativeName>
    <alternativeName>
        <fullName>Rotamase B</fullName>
    </alternativeName>
    <alternativeName>
        <fullName>S-cyclophilin</fullName>
        <shortName>SCYLP</shortName>
    </alternativeName>
</protein>